<comment type="function">
    <text evidence="1">Involved in the biosynthesis of the chorismate, which leads to the biosynthesis of aromatic amino acids. Catalyzes the reversible NADPH linked reduction of 3-dehydroshikimate (DHSA) to yield shikimate (SA).</text>
</comment>
<comment type="catalytic activity">
    <reaction evidence="1">
        <text>shikimate + NADP(+) = 3-dehydroshikimate + NADPH + H(+)</text>
        <dbReference type="Rhea" id="RHEA:17737"/>
        <dbReference type="ChEBI" id="CHEBI:15378"/>
        <dbReference type="ChEBI" id="CHEBI:16630"/>
        <dbReference type="ChEBI" id="CHEBI:36208"/>
        <dbReference type="ChEBI" id="CHEBI:57783"/>
        <dbReference type="ChEBI" id="CHEBI:58349"/>
        <dbReference type="EC" id="1.1.1.25"/>
    </reaction>
</comment>
<comment type="pathway">
    <text evidence="1">Metabolic intermediate biosynthesis; chorismate biosynthesis; chorismate from D-erythrose 4-phosphate and phosphoenolpyruvate: step 4/7.</text>
</comment>
<comment type="subunit">
    <text evidence="1">Homodimer.</text>
</comment>
<comment type="similarity">
    <text evidence="1">Belongs to the shikimate dehydrogenase family.</text>
</comment>
<organism>
    <name type="scientific">Bordetella petrii (strain ATCC BAA-461 / DSM 12804 / CCUG 43448)</name>
    <dbReference type="NCBI Taxonomy" id="340100"/>
    <lineage>
        <taxon>Bacteria</taxon>
        <taxon>Pseudomonadati</taxon>
        <taxon>Pseudomonadota</taxon>
        <taxon>Betaproteobacteria</taxon>
        <taxon>Burkholderiales</taxon>
        <taxon>Alcaligenaceae</taxon>
        <taxon>Bordetella</taxon>
    </lineage>
</organism>
<evidence type="ECO:0000255" key="1">
    <source>
        <dbReference type="HAMAP-Rule" id="MF_00222"/>
    </source>
</evidence>
<keyword id="KW-0028">Amino-acid biosynthesis</keyword>
<keyword id="KW-0057">Aromatic amino acid biosynthesis</keyword>
<keyword id="KW-0521">NADP</keyword>
<keyword id="KW-0560">Oxidoreductase</keyword>
<proteinExistence type="inferred from homology"/>
<sequence>MSQASPLPRYAVIGNPVAHSRSPQIHAMFSSQTGKPLQYERLLAPVDGFAATVQAFREQGGLGLNVTVPFKEEACQLAGAHLSERARLAGAVNTLWLRDGAWHGCNTDGVGLVSDLLRLGVVLEGARVLLVGAGGAARGVLQPLAAAGCARIHIVNRSAQRAHDLAAGWAAAGAVPGTRVTAGALAEAGVAGGWNVVVNATASSLQGAAPELPRGLYAPDALAYDMMYAAHPTAFMRQATDDGAARTADGLGMLVGQAAESFLIWHGVRPDPSPVLTALRATLLAKD</sequence>
<protein>
    <recommendedName>
        <fullName evidence="1">Shikimate dehydrogenase (NADP(+))</fullName>
        <shortName evidence="1">SDH</shortName>
        <ecNumber evidence="1">1.1.1.25</ecNumber>
    </recommendedName>
</protein>
<reference key="1">
    <citation type="journal article" date="2008" name="BMC Genomics">
        <title>The missing link: Bordetella petrii is endowed with both the metabolic versatility of environmental bacteria and virulence traits of pathogenic Bordetellae.</title>
        <authorList>
            <person name="Gross R."/>
            <person name="Guzman C.A."/>
            <person name="Sebaihia M."/>
            <person name="Martin dos Santos V.A.P."/>
            <person name="Pieper D.H."/>
            <person name="Koebnik R."/>
            <person name="Lechner M."/>
            <person name="Bartels D."/>
            <person name="Buhrmester J."/>
            <person name="Choudhuri J.V."/>
            <person name="Ebensen T."/>
            <person name="Gaigalat L."/>
            <person name="Herrmann S."/>
            <person name="Khachane A.N."/>
            <person name="Larisch C."/>
            <person name="Link S."/>
            <person name="Linke B."/>
            <person name="Meyer F."/>
            <person name="Mormann S."/>
            <person name="Nakunst D."/>
            <person name="Rueckert C."/>
            <person name="Schneiker-Bekel S."/>
            <person name="Schulze K."/>
            <person name="Voerholter F.-J."/>
            <person name="Yevsa T."/>
            <person name="Engle J.T."/>
            <person name="Goldman W.E."/>
            <person name="Puehler A."/>
            <person name="Goebel U.B."/>
            <person name="Goesmann A."/>
            <person name="Bloecker H."/>
            <person name="Kaiser O."/>
            <person name="Martinez-Arias R."/>
        </authorList>
    </citation>
    <scope>NUCLEOTIDE SEQUENCE [LARGE SCALE GENOMIC DNA]</scope>
    <source>
        <strain>ATCC BAA-461 / DSM 12804 / CCUG 43448</strain>
    </source>
</reference>
<feature type="chain" id="PRO_1000100105" description="Shikimate dehydrogenase (NADP(+))">
    <location>
        <begin position="1"/>
        <end position="287"/>
    </location>
</feature>
<feature type="active site" description="Proton acceptor" evidence="1">
    <location>
        <position position="71"/>
    </location>
</feature>
<feature type="binding site" evidence="1">
    <location>
        <begin position="20"/>
        <end position="22"/>
    </location>
    <ligand>
        <name>shikimate</name>
        <dbReference type="ChEBI" id="CHEBI:36208"/>
    </ligand>
</feature>
<feature type="binding site" evidence="1">
    <location>
        <position position="67"/>
    </location>
    <ligand>
        <name>shikimate</name>
        <dbReference type="ChEBI" id="CHEBI:36208"/>
    </ligand>
</feature>
<feature type="binding site" evidence="1">
    <location>
        <position position="84"/>
    </location>
    <ligand>
        <name>NADP(+)</name>
        <dbReference type="ChEBI" id="CHEBI:58349"/>
    </ligand>
</feature>
<feature type="binding site" evidence="1">
    <location>
        <position position="93"/>
    </location>
    <ligand>
        <name>shikimate</name>
        <dbReference type="ChEBI" id="CHEBI:36208"/>
    </ligand>
</feature>
<feature type="binding site" evidence="1">
    <location>
        <position position="108"/>
    </location>
    <ligand>
        <name>shikimate</name>
        <dbReference type="ChEBI" id="CHEBI:36208"/>
    </ligand>
</feature>
<feature type="binding site" evidence="1">
    <location>
        <begin position="132"/>
        <end position="136"/>
    </location>
    <ligand>
        <name>NADP(+)</name>
        <dbReference type="ChEBI" id="CHEBI:58349"/>
    </ligand>
</feature>
<feature type="binding site" evidence="1">
    <location>
        <position position="226"/>
    </location>
    <ligand>
        <name>NADP(+)</name>
        <dbReference type="ChEBI" id="CHEBI:58349"/>
    </ligand>
</feature>
<feature type="binding site" evidence="1">
    <location>
        <position position="228"/>
    </location>
    <ligand>
        <name>shikimate</name>
        <dbReference type="ChEBI" id="CHEBI:36208"/>
    </ligand>
</feature>
<feature type="binding site" evidence="1">
    <location>
        <position position="250"/>
    </location>
    <ligand>
        <name>NADP(+)</name>
        <dbReference type="ChEBI" id="CHEBI:58349"/>
    </ligand>
</feature>
<dbReference type="EC" id="1.1.1.25" evidence="1"/>
<dbReference type="EMBL" id="AM902716">
    <property type="protein sequence ID" value="CAP40899.1"/>
    <property type="molecule type" value="Genomic_DNA"/>
</dbReference>
<dbReference type="SMR" id="A9I1U7"/>
<dbReference type="STRING" id="94624.Bpet0567"/>
<dbReference type="KEGG" id="bpt:Bpet0567"/>
<dbReference type="eggNOG" id="COG0169">
    <property type="taxonomic scope" value="Bacteria"/>
</dbReference>
<dbReference type="UniPathway" id="UPA00053">
    <property type="reaction ID" value="UER00087"/>
</dbReference>
<dbReference type="Proteomes" id="UP000001225">
    <property type="component" value="Chromosome"/>
</dbReference>
<dbReference type="GO" id="GO:0005829">
    <property type="term" value="C:cytosol"/>
    <property type="evidence" value="ECO:0007669"/>
    <property type="project" value="TreeGrafter"/>
</dbReference>
<dbReference type="GO" id="GO:0050661">
    <property type="term" value="F:NADP binding"/>
    <property type="evidence" value="ECO:0007669"/>
    <property type="project" value="InterPro"/>
</dbReference>
<dbReference type="GO" id="GO:0004764">
    <property type="term" value="F:shikimate 3-dehydrogenase (NADP+) activity"/>
    <property type="evidence" value="ECO:0007669"/>
    <property type="project" value="UniProtKB-UniRule"/>
</dbReference>
<dbReference type="GO" id="GO:0008652">
    <property type="term" value="P:amino acid biosynthetic process"/>
    <property type="evidence" value="ECO:0007669"/>
    <property type="project" value="UniProtKB-KW"/>
</dbReference>
<dbReference type="GO" id="GO:0009073">
    <property type="term" value="P:aromatic amino acid family biosynthetic process"/>
    <property type="evidence" value="ECO:0007669"/>
    <property type="project" value="UniProtKB-KW"/>
</dbReference>
<dbReference type="GO" id="GO:0009423">
    <property type="term" value="P:chorismate biosynthetic process"/>
    <property type="evidence" value="ECO:0007669"/>
    <property type="project" value="UniProtKB-UniRule"/>
</dbReference>
<dbReference type="GO" id="GO:0019632">
    <property type="term" value="P:shikimate metabolic process"/>
    <property type="evidence" value="ECO:0007669"/>
    <property type="project" value="InterPro"/>
</dbReference>
<dbReference type="CDD" id="cd01065">
    <property type="entry name" value="NAD_bind_Shikimate_DH"/>
    <property type="match status" value="1"/>
</dbReference>
<dbReference type="FunFam" id="3.40.50.10860:FF:000006">
    <property type="entry name" value="Shikimate dehydrogenase (NADP(+))"/>
    <property type="match status" value="1"/>
</dbReference>
<dbReference type="Gene3D" id="3.40.50.10860">
    <property type="entry name" value="Leucine Dehydrogenase, chain A, domain 1"/>
    <property type="match status" value="1"/>
</dbReference>
<dbReference type="Gene3D" id="3.40.50.720">
    <property type="entry name" value="NAD(P)-binding Rossmann-like Domain"/>
    <property type="match status" value="1"/>
</dbReference>
<dbReference type="HAMAP" id="MF_00222">
    <property type="entry name" value="Shikimate_DH_AroE"/>
    <property type="match status" value="1"/>
</dbReference>
<dbReference type="InterPro" id="IPR046346">
    <property type="entry name" value="Aminoacid_DH-like_N_sf"/>
</dbReference>
<dbReference type="InterPro" id="IPR036291">
    <property type="entry name" value="NAD(P)-bd_dom_sf"/>
</dbReference>
<dbReference type="InterPro" id="IPR041121">
    <property type="entry name" value="SDH_C"/>
</dbReference>
<dbReference type="InterPro" id="IPR011342">
    <property type="entry name" value="Shikimate_DH"/>
</dbReference>
<dbReference type="InterPro" id="IPR013708">
    <property type="entry name" value="Shikimate_DH-bd_N"/>
</dbReference>
<dbReference type="InterPro" id="IPR022893">
    <property type="entry name" value="Shikimate_DH_fam"/>
</dbReference>
<dbReference type="InterPro" id="IPR006151">
    <property type="entry name" value="Shikm_DH/Glu-tRNA_Rdtase"/>
</dbReference>
<dbReference type="NCBIfam" id="TIGR00507">
    <property type="entry name" value="aroE"/>
    <property type="match status" value="1"/>
</dbReference>
<dbReference type="NCBIfam" id="NF001310">
    <property type="entry name" value="PRK00258.1-2"/>
    <property type="match status" value="1"/>
</dbReference>
<dbReference type="PANTHER" id="PTHR21089:SF1">
    <property type="entry name" value="BIFUNCTIONAL 3-DEHYDROQUINATE DEHYDRATASE_SHIKIMATE DEHYDROGENASE, CHLOROPLASTIC"/>
    <property type="match status" value="1"/>
</dbReference>
<dbReference type="PANTHER" id="PTHR21089">
    <property type="entry name" value="SHIKIMATE DEHYDROGENASE"/>
    <property type="match status" value="1"/>
</dbReference>
<dbReference type="Pfam" id="PF18317">
    <property type="entry name" value="SDH_C"/>
    <property type="match status" value="1"/>
</dbReference>
<dbReference type="Pfam" id="PF01488">
    <property type="entry name" value="Shikimate_DH"/>
    <property type="match status" value="1"/>
</dbReference>
<dbReference type="Pfam" id="PF08501">
    <property type="entry name" value="Shikimate_dh_N"/>
    <property type="match status" value="1"/>
</dbReference>
<dbReference type="SUPFAM" id="SSF53223">
    <property type="entry name" value="Aminoacid dehydrogenase-like, N-terminal domain"/>
    <property type="match status" value="1"/>
</dbReference>
<dbReference type="SUPFAM" id="SSF51735">
    <property type="entry name" value="NAD(P)-binding Rossmann-fold domains"/>
    <property type="match status" value="1"/>
</dbReference>
<accession>A9I1U7</accession>
<name>AROE_BORPD</name>
<gene>
    <name evidence="1" type="primary">aroE</name>
    <name type="ordered locus">Bpet0567</name>
</gene>